<comment type="function">
    <text evidence="1">Plays an important role in virus transmission by the insect vector. May participate in the virus stability by binding clamp proteins and surrounding the pentameric turrets present in the virion.</text>
</comment>
<comment type="subcellular location">
    <subcellularLocation>
        <location evidence="1">Virion</location>
    </subcellularLocation>
</comment>
<organism>
    <name type="scientific">Rice ragged stunt virus (isolate Thailand)</name>
    <name type="common">RRSV</name>
    <dbReference type="NCBI Taxonomy" id="649603"/>
    <lineage>
        <taxon>Viruses</taxon>
        <taxon>Riboviria</taxon>
        <taxon>Orthornavirae</taxon>
        <taxon>Duplornaviricota</taxon>
        <taxon>Resentoviricetes</taxon>
        <taxon>Reovirales</taxon>
        <taxon>Spinareoviridae</taxon>
        <taxon>Oryzavirus</taxon>
        <taxon>Rice ragged stunt virus</taxon>
    </lineage>
</organism>
<evidence type="ECO:0000269" key="1">
    <source>
    </source>
</evidence>
<sequence>MKTAFARDPFTAPATGTYGTIYASRSLPRLSISKFLEDANPEIYELSRYEALGTNRPSSGKRAMQPAVSKPALLETVFTLDIWYRRTNNQNIGNLRDSVSRFLSDDRVREAVMVRLDLDIVVQLKEYWLIVKDKEAQTFADRLAFDSHLFVNRGENANYDLVTQTFIPSDTFLKDNFKTEALKKLLLSVQSHTGLDAGLQGDSSKATYNIGLGQYLEDEALLYRQGVALQQMAFAELELARGAEKEAFPSTFDLSNRPACNLILKRTCKWYQQTFKAEERKEFAKSLWVDDFAEANWNTGNLSFGFSTTLNVIERWRLTRFYVHMYSSVHIYSQKASG</sequence>
<reference key="1">
    <citation type="journal article" date="1995" name="Arch. Virol.">
        <title>Molecular analysis of rice ragged stunt oryzavirus segment 9 and sequence conservation among isolates from Thailand and India.</title>
        <authorList>
            <person name="Upadhyaya N.M."/>
            <person name="Yang M."/>
            <person name="Kositratana W."/>
            <person name="Ghosh A."/>
            <person name="Waterhouse P.M."/>
        </authorList>
    </citation>
    <scope>NUCLEOTIDE SEQUENCE [GENOMIC RNA]</scope>
</reference>
<reference key="2">
    <citation type="journal article" date="1999" name="Sheng Wu Hua Xue Yu Sheng Wu Wu Li Xue Bao">
        <title>Localization of PS9 in rice ragged stunt oryzavirus and its role in virus transmission by Brown Planthopper.</title>
        <authorList>
            <person name="Lu X.B."/>
            <person name="Peng B.Z."/>
            <person name="Zhou G.Y."/>
            <person name="Jin D.D."/>
            <person name="Chen S.X."/>
            <person name="Gong Z.X."/>
        </authorList>
    </citation>
    <scope>FUNCTION</scope>
    <scope>SUBCELLULAR LOCATION</scope>
</reference>
<organismHost>
    <name type="scientific">Oryza latifolia</name>
    <dbReference type="NCBI Taxonomy" id="4534"/>
</organismHost>
<organismHost>
    <name type="scientific">Oryza nivara</name>
    <name type="common">Indian wild rice</name>
    <name type="synonym">Oryza sativa f. spontanea</name>
    <dbReference type="NCBI Taxonomy" id="4536"/>
</organismHost>
<organismHost>
    <name type="scientific">Oryza rufipogon</name>
    <name type="common">Brownbeard rice</name>
    <name type="synonym">Asian wild rice</name>
    <dbReference type="NCBI Taxonomy" id="4529"/>
</organismHost>
<proteinExistence type="predicted"/>
<accession>Q86287</accession>
<keyword id="KW-0167">Capsid protein</keyword>
<keyword id="KW-1185">Reference proteome</keyword>
<keyword id="KW-0946">Virion</keyword>
<protein>
    <recommendedName>
        <fullName>Structural protein VP9</fullName>
    </recommendedName>
</protein>
<feature type="chain" id="PRO_0000403640" description="Structural protein VP9">
    <location>
        <begin position="1"/>
        <end position="338"/>
    </location>
</feature>
<dbReference type="EMBL" id="L38900">
    <property type="protein sequence ID" value="AAA85466.1"/>
    <property type="molecule type" value="Genomic_RNA"/>
</dbReference>
<dbReference type="Proteomes" id="UP000000348">
    <property type="component" value="Genome"/>
</dbReference>
<dbReference type="GO" id="GO:0019028">
    <property type="term" value="C:viral capsid"/>
    <property type="evidence" value="ECO:0007669"/>
    <property type="project" value="UniProtKB-KW"/>
</dbReference>
<name>VP9_RRSVT</name>